<name>FADI_SALPC</name>
<proteinExistence type="inferred from homology"/>
<comment type="function">
    <text evidence="1">Catalyzes the final step of fatty acid oxidation in which acetyl-CoA is released and the CoA ester of a fatty acid two carbons shorter is formed.</text>
</comment>
<comment type="catalytic activity">
    <reaction evidence="1">
        <text>an acyl-CoA + acetyl-CoA = a 3-oxoacyl-CoA + CoA</text>
        <dbReference type="Rhea" id="RHEA:21564"/>
        <dbReference type="ChEBI" id="CHEBI:57287"/>
        <dbReference type="ChEBI" id="CHEBI:57288"/>
        <dbReference type="ChEBI" id="CHEBI:58342"/>
        <dbReference type="ChEBI" id="CHEBI:90726"/>
        <dbReference type="EC" id="2.3.1.16"/>
    </reaction>
</comment>
<comment type="pathway">
    <text evidence="1">Lipid metabolism; fatty acid beta-oxidation.</text>
</comment>
<comment type="subunit">
    <text evidence="1">Heterotetramer of two alpha chains (FadJ) and two beta chains (FadI).</text>
</comment>
<comment type="subcellular location">
    <subcellularLocation>
        <location evidence="1">Cytoplasm</location>
    </subcellularLocation>
</comment>
<comment type="similarity">
    <text evidence="1">Belongs to the thiolase-like superfamily. Thiolase family.</text>
</comment>
<gene>
    <name evidence="1" type="primary">fadI</name>
    <name type="ordered locus">SPC_1316</name>
</gene>
<reference key="1">
    <citation type="journal article" date="2009" name="PLoS ONE">
        <title>Salmonella paratyphi C: genetic divergence from Salmonella choleraesuis and pathogenic convergence with Salmonella typhi.</title>
        <authorList>
            <person name="Liu W.-Q."/>
            <person name="Feng Y."/>
            <person name="Wang Y."/>
            <person name="Zou Q.-H."/>
            <person name="Chen F."/>
            <person name="Guo J.-T."/>
            <person name="Peng Y.-H."/>
            <person name="Jin Y."/>
            <person name="Li Y.-G."/>
            <person name="Hu S.-N."/>
            <person name="Johnston R.N."/>
            <person name="Liu G.-R."/>
            <person name="Liu S.-L."/>
        </authorList>
    </citation>
    <scope>NUCLEOTIDE SEQUENCE [LARGE SCALE GENOMIC DNA]</scope>
    <source>
        <strain>RKS4594</strain>
    </source>
</reference>
<dbReference type="EC" id="2.3.1.16" evidence="1"/>
<dbReference type="EMBL" id="CP000857">
    <property type="protein sequence ID" value="ACN45479.1"/>
    <property type="molecule type" value="Genomic_DNA"/>
</dbReference>
<dbReference type="RefSeq" id="WP_001248135.1">
    <property type="nucleotide sequence ID" value="NC_012125.1"/>
</dbReference>
<dbReference type="SMR" id="C0PZX5"/>
<dbReference type="KEGG" id="sei:SPC_1316"/>
<dbReference type="HOGENOM" id="CLU_031026_2_0_6"/>
<dbReference type="UniPathway" id="UPA00659"/>
<dbReference type="Proteomes" id="UP000001599">
    <property type="component" value="Chromosome"/>
</dbReference>
<dbReference type="GO" id="GO:0005829">
    <property type="term" value="C:cytosol"/>
    <property type="evidence" value="ECO:0007669"/>
    <property type="project" value="TreeGrafter"/>
</dbReference>
<dbReference type="GO" id="GO:0003988">
    <property type="term" value="F:acetyl-CoA C-acyltransferase activity"/>
    <property type="evidence" value="ECO:0007669"/>
    <property type="project" value="UniProtKB-UniRule"/>
</dbReference>
<dbReference type="GO" id="GO:0006635">
    <property type="term" value="P:fatty acid beta-oxidation"/>
    <property type="evidence" value="ECO:0007669"/>
    <property type="project" value="UniProtKB-UniRule"/>
</dbReference>
<dbReference type="CDD" id="cd00751">
    <property type="entry name" value="thiolase"/>
    <property type="match status" value="1"/>
</dbReference>
<dbReference type="FunFam" id="3.40.47.10:FF:000011">
    <property type="entry name" value="3-ketoacyl-CoA thiolase"/>
    <property type="match status" value="1"/>
</dbReference>
<dbReference type="Gene3D" id="3.40.47.10">
    <property type="match status" value="1"/>
</dbReference>
<dbReference type="HAMAP" id="MF_01618">
    <property type="entry name" value="FadI"/>
    <property type="match status" value="1"/>
</dbReference>
<dbReference type="InterPro" id="IPR012806">
    <property type="entry name" value="Ac-CoA_C-AcTrfase_FadI"/>
</dbReference>
<dbReference type="InterPro" id="IPR002155">
    <property type="entry name" value="Thiolase"/>
</dbReference>
<dbReference type="InterPro" id="IPR016039">
    <property type="entry name" value="Thiolase-like"/>
</dbReference>
<dbReference type="InterPro" id="IPR020615">
    <property type="entry name" value="Thiolase_acyl_enz_int_AS"/>
</dbReference>
<dbReference type="InterPro" id="IPR020610">
    <property type="entry name" value="Thiolase_AS"/>
</dbReference>
<dbReference type="InterPro" id="IPR020617">
    <property type="entry name" value="Thiolase_C"/>
</dbReference>
<dbReference type="InterPro" id="IPR020613">
    <property type="entry name" value="Thiolase_CS"/>
</dbReference>
<dbReference type="InterPro" id="IPR020616">
    <property type="entry name" value="Thiolase_N"/>
</dbReference>
<dbReference type="NCBIfam" id="TIGR01930">
    <property type="entry name" value="AcCoA-C-Actrans"/>
    <property type="match status" value="1"/>
</dbReference>
<dbReference type="NCBIfam" id="TIGR02446">
    <property type="entry name" value="FadI"/>
    <property type="match status" value="1"/>
</dbReference>
<dbReference type="NCBIfam" id="NF006516">
    <property type="entry name" value="PRK08963.1"/>
    <property type="match status" value="1"/>
</dbReference>
<dbReference type="PANTHER" id="PTHR18919:SF107">
    <property type="entry name" value="ACETYL-COA ACETYLTRANSFERASE, CYTOSOLIC"/>
    <property type="match status" value="1"/>
</dbReference>
<dbReference type="PANTHER" id="PTHR18919">
    <property type="entry name" value="ACETYL-COA C-ACYLTRANSFERASE"/>
    <property type="match status" value="1"/>
</dbReference>
<dbReference type="Pfam" id="PF02803">
    <property type="entry name" value="Thiolase_C"/>
    <property type="match status" value="1"/>
</dbReference>
<dbReference type="Pfam" id="PF00108">
    <property type="entry name" value="Thiolase_N"/>
    <property type="match status" value="1"/>
</dbReference>
<dbReference type="PIRSF" id="PIRSF000429">
    <property type="entry name" value="Ac-CoA_Ac_transf"/>
    <property type="match status" value="1"/>
</dbReference>
<dbReference type="SUPFAM" id="SSF53901">
    <property type="entry name" value="Thiolase-like"/>
    <property type="match status" value="2"/>
</dbReference>
<dbReference type="PROSITE" id="PS00098">
    <property type="entry name" value="THIOLASE_1"/>
    <property type="match status" value="1"/>
</dbReference>
<dbReference type="PROSITE" id="PS00737">
    <property type="entry name" value="THIOLASE_2"/>
    <property type="match status" value="1"/>
</dbReference>
<dbReference type="PROSITE" id="PS00099">
    <property type="entry name" value="THIOLASE_3"/>
    <property type="match status" value="1"/>
</dbReference>
<evidence type="ECO:0000255" key="1">
    <source>
        <dbReference type="HAMAP-Rule" id="MF_01618"/>
    </source>
</evidence>
<feature type="chain" id="PRO_1000185976" description="3-ketoacyl-CoA thiolase">
    <location>
        <begin position="1"/>
        <end position="436"/>
    </location>
</feature>
<feature type="active site" description="Acyl-thioester intermediate" evidence="1">
    <location>
        <position position="99"/>
    </location>
</feature>
<feature type="active site" description="Proton acceptor" evidence="1">
    <location>
        <position position="392"/>
    </location>
</feature>
<feature type="active site" description="Proton acceptor" evidence="1">
    <location>
        <position position="422"/>
    </location>
</feature>
<protein>
    <recommendedName>
        <fullName evidence="1">3-ketoacyl-CoA thiolase</fullName>
        <ecNumber evidence="1">2.3.1.16</ecNumber>
    </recommendedName>
    <alternativeName>
        <fullName evidence="1">ACSs</fullName>
    </alternativeName>
    <alternativeName>
        <fullName evidence="1">Acetyl-CoA acyltransferase</fullName>
    </alternativeName>
    <alternativeName>
        <fullName evidence="1">Acyl-CoA ligase</fullName>
    </alternativeName>
    <alternativeName>
        <fullName evidence="1">Beta-ketothiolase</fullName>
    </alternativeName>
    <alternativeName>
        <fullName evidence="1">Fatty acid oxidation complex subunit beta</fullName>
    </alternativeName>
</protein>
<keyword id="KW-0012">Acyltransferase</keyword>
<keyword id="KW-0963">Cytoplasm</keyword>
<keyword id="KW-0276">Fatty acid metabolism</keyword>
<keyword id="KW-0442">Lipid degradation</keyword>
<keyword id="KW-0443">Lipid metabolism</keyword>
<keyword id="KW-0808">Transferase</keyword>
<sequence>MRQALPLVTRQGDRIAIVSGLRTPFARQATAFHGIPAVDLGKMVVGELLARSEIPADAIEQLVFGQVVQMPEAPNIAREIVLGTGMNVHTGAYSVSRACATSFQAVANVAESLMAGTIRAGIAGGADSSSVLPIGVSKALARALVDVNKARTTRQRLTLFSRLRLRDLLPVPPAVAEYSTGLRMGDTAEQMAKTYGITREQQDALAHRSHQRAAQAWAEGKLAEEVMTTYVPPYKNPFAEDNNIRGTSTLADYAKLRPAFDRKHGSVTAANSTPLTDGAAAVILMTESRAKELGLRPLGYLRSYAFTAIDVWQDMLLGPAWSTPLALERAGLTMADLTLFDMHEAFAAQTLANLQLLGSERFAREVLGRAQATGEVDDAKFNVLGGSIAYGHPFAATGARMITQTLHELRRRGGGFGLVTACAAGGLGAAMVLEAE</sequence>
<accession>C0PZX5</accession>
<organism>
    <name type="scientific">Salmonella paratyphi C (strain RKS4594)</name>
    <dbReference type="NCBI Taxonomy" id="476213"/>
    <lineage>
        <taxon>Bacteria</taxon>
        <taxon>Pseudomonadati</taxon>
        <taxon>Pseudomonadota</taxon>
        <taxon>Gammaproteobacteria</taxon>
        <taxon>Enterobacterales</taxon>
        <taxon>Enterobacteriaceae</taxon>
        <taxon>Salmonella</taxon>
    </lineage>
</organism>